<reference key="1">
    <citation type="journal article" date="2001" name="Curr. Opin. Plant Biol.">
        <title>The R2R3-MYB gene family in Arabidopsis thaliana.</title>
        <authorList>
            <person name="Stracke R."/>
            <person name="Werber M."/>
            <person name="Weisshaar B."/>
        </authorList>
    </citation>
    <scope>NUCLEOTIDE SEQUENCE [MRNA]</scope>
    <scope>GENE FAMILY</scope>
    <scope>NOMENCLATURE</scope>
    <source>
        <strain>cv. Columbia</strain>
    </source>
</reference>
<reference key="2">
    <citation type="journal article" date="1999" name="Nature">
        <title>Sequence and analysis of chromosome 4 of the plant Arabidopsis thaliana.</title>
        <authorList>
            <person name="Mayer K.F.X."/>
            <person name="Schueller C."/>
            <person name="Wambutt R."/>
            <person name="Murphy G."/>
            <person name="Volckaert G."/>
            <person name="Pohl T."/>
            <person name="Duesterhoeft A."/>
            <person name="Stiekema W."/>
            <person name="Entian K.-D."/>
            <person name="Terryn N."/>
            <person name="Harris B."/>
            <person name="Ansorge W."/>
            <person name="Brandt P."/>
            <person name="Grivell L.A."/>
            <person name="Rieger M."/>
            <person name="Weichselgartner M."/>
            <person name="de Simone V."/>
            <person name="Obermaier B."/>
            <person name="Mache R."/>
            <person name="Mueller M."/>
            <person name="Kreis M."/>
            <person name="Delseny M."/>
            <person name="Puigdomenech P."/>
            <person name="Watson M."/>
            <person name="Schmidtheini T."/>
            <person name="Reichert B."/>
            <person name="Portetelle D."/>
            <person name="Perez-Alonso M."/>
            <person name="Boutry M."/>
            <person name="Bancroft I."/>
            <person name="Vos P."/>
            <person name="Hoheisel J."/>
            <person name="Zimmermann W."/>
            <person name="Wedler H."/>
            <person name="Ridley P."/>
            <person name="Langham S.-A."/>
            <person name="McCullagh B."/>
            <person name="Bilham L."/>
            <person name="Robben J."/>
            <person name="van der Schueren J."/>
            <person name="Grymonprez B."/>
            <person name="Chuang Y.-J."/>
            <person name="Vandenbussche F."/>
            <person name="Braeken M."/>
            <person name="Weltjens I."/>
            <person name="Voet M."/>
            <person name="Bastiaens I."/>
            <person name="Aert R."/>
            <person name="Defoor E."/>
            <person name="Weitzenegger T."/>
            <person name="Bothe G."/>
            <person name="Ramsperger U."/>
            <person name="Hilbert H."/>
            <person name="Braun M."/>
            <person name="Holzer E."/>
            <person name="Brandt A."/>
            <person name="Peters S."/>
            <person name="van Staveren M."/>
            <person name="Dirkse W."/>
            <person name="Mooijman P."/>
            <person name="Klein Lankhorst R."/>
            <person name="Rose M."/>
            <person name="Hauf J."/>
            <person name="Koetter P."/>
            <person name="Berneiser S."/>
            <person name="Hempel S."/>
            <person name="Feldpausch M."/>
            <person name="Lamberth S."/>
            <person name="Van den Daele H."/>
            <person name="De Keyser A."/>
            <person name="Buysshaert C."/>
            <person name="Gielen J."/>
            <person name="Villarroel R."/>
            <person name="De Clercq R."/>
            <person name="van Montagu M."/>
            <person name="Rogers J."/>
            <person name="Cronin A."/>
            <person name="Quail M.A."/>
            <person name="Bray-Allen S."/>
            <person name="Clark L."/>
            <person name="Doggett J."/>
            <person name="Hall S."/>
            <person name="Kay M."/>
            <person name="Lennard N."/>
            <person name="McLay K."/>
            <person name="Mayes R."/>
            <person name="Pettett A."/>
            <person name="Rajandream M.A."/>
            <person name="Lyne M."/>
            <person name="Benes V."/>
            <person name="Rechmann S."/>
            <person name="Borkova D."/>
            <person name="Bloecker H."/>
            <person name="Scharfe M."/>
            <person name="Grimm M."/>
            <person name="Loehnert T.-H."/>
            <person name="Dose S."/>
            <person name="de Haan M."/>
            <person name="Maarse A.C."/>
            <person name="Schaefer M."/>
            <person name="Mueller-Auer S."/>
            <person name="Gabel C."/>
            <person name="Fuchs M."/>
            <person name="Fartmann B."/>
            <person name="Granderath K."/>
            <person name="Dauner D."/>
            <person name="Herzl A."/>
            <person name="Neumann S."/>
            <person name="Argiriou A."/>
            <person name="Vitale D."/>
            <person name="Liguori R."/>
            <person name="Piravandi E."/>
            <person name="Massenet O."/>
            <person name="Quigley F."/>
            <person name="Clabauld G."/>
            <person name="Muendlein A."/>
            <person name="Felber R."/>
            <person name="Schnabl S."/>
            <person name="Hiller R."/>
            <person name="Schmidt W."/>
            <person name="Lecharny A."/>
            <person name="Aubourg S."/>
            <person name="Chefdor F."/>
            <person name="Cooke R."/>
            <person name="Berger C."/>
            <person name="Monfort A."/>
            <person name="Casacuberta E."/>
            <person name="Gibbons T."/>
            <person name="Weber N."/>
            <person name="Vandenbol M."/>
            <person name="Bargues M."/>
            <person name="Terol J."/>
            <person name="Torres A."/>
            <person name="Perez-Perez A."/>
            <person name="Purnelle B."/>
            <person name="Bent E."/>
            <person name="Johnson S."/>
            <person name="Tacon D."/>
            <person name="Jesse T."/>
            <person name="Heijnen L."/>
            <person name="Schwarz S."/>
            <person name="Scholler P."/>
            <person name="Heber S."/>
            <person name="Francs P."/>
            <person name="Bielke C."/>
            <person name="Frishman D."/>
            <person name="Haase D."/>
            <person name="Lemcke K."/>
            <person name="Mewes H.-W."/>
            <person name="Stocker S."/>
            <person name="Zaccaria P."/>
            <person name="Bevan M."/>
            <person name="Wilson R.K."/>
            <person name="de la Bastide M."/>
            <person name="Habermann K."/>
            <person name="Parnell L."/>
            <person name="Dedhia N."/>
            <person name="Gnoj L."/>
            <person name="Schutz K."/>
            <person name="Huang E."/>
            <person name="Spiegel L."/>
            <person name="Sekhon M."/>
            <person name="Murray J."/>
            <person name="Sheet P."/>
            <person name="Cordes M."/>
            <person name="Abu-Threideh J."/>
            <person name="Stoneking T."/>
            <person name="Kalicki J."/>
            <person name="Graves T."/>
            <person name="Harmon G."/>
            <person name="Edwards J."/>
            <person name="Latreille P."/>
            <person name="Courtney L."/>
            <person name="Cloud J."/>
            <person name="Abbott A."/>
            <person name="Scott K."/>
            <person name="Johnson D."/>
            <person name="Minx P."/>
            <person name="Bentley D."/>
            <person name="Fulton B."/>
            <person name="Miller N."/>
            <person name="Greco T."/>
            <person name="Kemp K."/>
            <person name="Kramer J."/>
            <person name="Fulton L."/>
            <person name="Mardis E."/>
            <person name="Dante M."/>
            <person name="Pepin K."/>
            <person name="Hillier L.W."/>
            <person name="Nelson J."/>
            <person name="Spieth J."/>
            <person name="Ryan E."/>
            <person name="Andrews S."/>
            <person name="Geisel C."/>
            <person name="Layman D."/>
            <person name="Du H."/>
            <person name="Ali J."/>
            <person name="Berghoff A."/>
            <person name="Jones K."/>
            <person name="Drone K."/>
            <person name="Cotton M."/>
            <person name="Joshu C."/>
            <person name="Antonoiu B."/>
            <person name="Zidanic M."/>
            <person name="Strong C."/>
            <person name="Sun H."/>
            <person name="Lamar B."/>
            <person name="Yordan C."/>
            <person name="Ma P."/>
            <person name="Zhong J."/>
            <person name="Preston R."/>
            <person name="Vil D."/>
            <person name="Shekher M."/>
            <person name="Matero A."/>
            <person name="Shah R."/>
            <person name="Swaby I.K."/>
            <person name="O'Shaughnessy A."/>
            <person name="Rodriguez M."/>
            <person name="Hoffman J."/>
            <person name="Till S."/>
            <person name="Granat S."/>
            <person name="Shohdy N."/>
            <person name="Hasegawa A."/>
            <person name="Hameed A."/>
            <person name="Lodhi M."/>
            <person name="Johnson A."/>
            <person name="Chen E."/>
            <person name="Marra M.A."/>
            <person name="Martienssen R."/>
            <person name="McCombie W.R."/>
        </authorList>
    </citation>
    <scope>NUCLEOTIDE SEQUENCE [LARGE SCALE GENOMIC DNA]</scope>
    <source>
        <strain>cv. Columbia</strain>
    </source>
</reference>
<reference key="3">
    <citation type="journal article" date="2017" name="Plant J.">
        <title>Araport11: a complete reannotation of the Arabidopsis thaliana reference genome.</title>
        <authorList>
            <person name="Cheng C.Y."/>
            <person name="Krishnakumar V."/>
            <person name="Chan A.P."/>
            <person name="Thibaud-Nissen F."/>
            <person name="Schobel S."/>
            <person name="Town C.D."/>
        </authorList>
    </citation>
    <scope>GENOME REANNOTATION</scope>
    <source>
        <strain>cv. Columbia</strain>
    </source>
</reference>
<reference key="4">
    <citation type="journal article" date="2006" name="Plant Biotechnol. J.">
        <title>Simultaneous high-throughput recombinational cloning of open reading frames in closed and open configurations.</title>
        <authorList>
            <person name="Underwood B.A."/>
            <person name="Vanderhaeghen R."/>
            <person name="Whitford R."/>
            <person name="Town C.D."/>
            <person name="Hilson P."/>
        </authorList>
    </citation>
    <scope>NUCLEOTIDE SEQUENCE [LARGE SCALE MRNA]</scope>
    <source>
        <strain>cv. Columbia</strain>
    </source>
</reference>
<reference key="5">
    <citation type="journal article" date="2003" name="Plant Physiol.">
        <title>Transcriptional profiling of Arabidopsis tissues reveals the unique characteristics of the pollen transcriptome.</title>
        <authorList>
            <person name="Becker J.D."/>
            <person name="Boavida L.C."/>
            <person name="Carneiro J."/>
            <person name="Haury M."/>
            <person name="Feijo J.A."/>
        </authorList>
    </citation>
    <scope>TISSUE SPECIFICITY</scope>
</reference>
<reference key="6">
    <citation type="journal article" date="2013" name="Curr. Biol.">
        <title>Three MYB transcription factors control pollen tube differentiation required for sperm release.</title>
        <authorList>
            <person name="Leydon A.R."/>
            <person name="Beale K.M."/>
            <person name="Woroniecka K."/>
            <person name="Castner E."/>
            <person name="Chen J."/>
            <person name="Horgan C."/>
            <person name="Palanivelu R."/>
            <person name="Johnson M.A."/>
        </authorList>
    </citation>
    <scope>FUNCTION</scope>
    <scope>DISRUPTION PHENOTYPE</scope>
    <scope>TISSUE SPECIFICITY</scope>
    <scope>DEVELOPMENTAL STAGE</scope>
    <scope>SUBCELLULAR LOCATION</scope>
    <source>
        <strain>cv. Columbia</strain>
    </source>
</reference>
<reference key="7">
    <citation type="journal article" date="2013" name="PLoS Genet.">
        <title>MYB97, MYB101 and MYB120 function as male factors that control pollen tube-synergid interaction in Arabidopsis thaliana fertilization.</title>
        <authorList>
            <person name="Liang Y."/>
            <person name="Tan Z.-M."/>
            <person name="Zhu L."/>
            <person name="Niu Q.-K."/>
            <person name="Zhou J.-J."/>
            <person name="Li M."/>
            <person name="Chen L.-Q."/>
            <person name="Zhang X.-Q."/>
            <person name="Ye D."/>
        </authorList>
    </citation>
    <scope>FUNCTION</scope>
    <scope>DISRUPTION PHENOTYPE</scope>
    <scope>SUBCELLULAR LOCATION</scope>
    <scope>TISSUE SPECIFICITY</scope>
    <source>
        <strain>cv. Columbia</strain>
    </source>
</reference>
<proteinExistence type="evidence at transcript level"/>
<organism>
    <name type="scientific">Arabidopsis thaliana</name>
    <name type="common">Mouse-ear cress</name>
    <dbReference type="NCBI Taxonomy" id="3702"/>
    <lineage>
        <taxon>Eukaryota</taxon>
        <taxon>Viridiplantae</taxon>
        <taxon>Streptophyta</taxon>
        <taxon>Embryophyta</taxon>
        <taxon>Tracheophyta</taxon>
        <taxon>Spermatophyta</taxon>
        <taxon>Magnoliopsida</taxon>
        <taxon>eudicotyledons</taxon>
        <taxon>Gunneridae</taxon>
        <taxon>Pentapetalae</taxon>
        <taxon>rosids</taxon>
        <taxon>malvids</taxon>
        <taxon>Brassicales</taxon>
        <taxon>Brassicaceae</taxon>
        <taxon>Camelineae</taxon>
        <taxon>Arabidopsis</taxon>
    </lineage>
</organism>
<protein>
    <recommendedName>
        <fullName evidence="7">Transcription factor MYB97</fullName>
    </recommendedName>
    <alternativeName>
        <fullName evidence="7">Myb-related protein 97</fullName>
        <shortName evidence="7">AtMYB97</shortName>
    </alternativeName>
</protein>
<comment type="function">
    <text evidence="1 5 6">Transcription activator (PubMed:24278028). Binds to 5'-CAACTGTC-3' and/or 5'-TAACAAA-3' motif in target gene promoter to promote their expression (By similarity). Together with MYB101 and MYB120, functions as a male factor that controls pollen tube-synergid interaction in fertilization. Required for pollen tube growth arrest and sperm cell release in the female gametophyte, probably via the regulation of pollen tube-specific gene expression (PubMed:23791732, PubMed:24278028).</text>
</comment>
<comment type="subcellular location">
    <subcellularLocation>
        <location evidence="2 5 6">Nucleus</location>
    </subcellularLocation>
    <text evidence="5">Detected in the vegetative nucleus of pollen tubes.</text>
</comment>
<comment type="tissue specificity">
    <text evidence="4 5 6">Accumulates in pollen grains and pollen tube (PubMed:14500793, PubMed:23791732, PubMed:24278028). Mostly expressed in mature pollen grains, and, to a lower extent, in inflorescences and siliques (PubMed:24278028).</text>
</comment>
<comment type="developmental stage">
    <text evidence="5">Accumulates in the pollen tube nucleus during pollen tube growth through the pistil.</text>
</comment>
<comment type="disruption phenotype">
    <text evidence="5 6">The triple mutant myb97 myb101 myb120 is impaired in pollen tube growth arrest and subsequent sperm cell release in the female gametophyte thus leading to a drastically reduced fertility. Altered pollen tube-specific gene expression.</text>
</comment>
<comment type="sequence caution" evidence="8">
    <conflict type="erroneous termination">
        <sequence resource="EMBL-CDS" id="ABK28651"/>
    </conflict>
    <text>Extended C-terminus.</text>
</comment>
<name>MYB97_ARATH</name>
<gene>
    <name evidence="7" type="primary">MYB97</name>
    <name evidence="9" type="ordered locus">At4g26930</name>
    <name evidence="10" type="ORF">F10M23.270</name>
</gene>
<feature type="chain" id="PRO_0000439244" description="Transcription factor MYB97">
    <location>
        <begin position="1"/>
        <end position="389"/>
    </location>
</feature>
<feature type="domain" description="HTH myb-type 1" evidence="2">
    <location>
        <begin position="16"/>
        <end position="68"/>
    </location>
</feature>
<feature type="domain" description="HTH myb-type 2" evidence="2">
    <location>
        <begin position="69"/>
        <end position="123"/>
    </location>
</feature>
<feature type="DNA-binding region" description="H-T-H motif" evidence="2">
    <location>
        <begin position="44"/>
        <end position="68"/>
    </location>
</feature>
<feature type="DNA-binding region" description="H-T-H motif" evidence="2">
    <location>
        <begin position="96"/>
        <end position="119"/>
    </location>
</feature>
<feature type="region of interest" description="Disordered" evidence="3">
    <location>
        <begin position="131"/>
        <end position="159"/>
    </location>
</feature>
<feature type="compositionally biased region" description="Low complexity" evidence="3">
    <location>
        <begin position="140"/>
        <end position="159"/>
    </location>
</feature>
<dbReference type="EMBL" id="AF176002">
    <property type="protein sequence ID" value="AAD53107.1"/>
    <property type="molecule type" value="mRNA"/>
</dbReference>
<dbReference type="EMBL" id="AL035440">
    <property type="protein sequence ID" value="CAB36539.1"/>
    <property type="molecule type" value="Genomic_DNA"/>
</dbReference>
<dbReference type="EMBL" id="AL161566">
    <property type="protein sequence ID" value="CAB79548.1"/>
    <property type="molecule type" value="Genomic_DNA"/>
</dbReference>
<dbReference type="EMBL" id="CP002687">
    <property type="protein sequence ID" value="AEE85271.1"/>
    <property type="molecule type" value="Genomic_DNA"/>
</dbReference>
<dbReference type="EMBL" id="DQ653226">
    <property type="protein sequence ID" value="ABK28651.1"/>
    <property type="status" value="ALT_SEQ"/>
    <property type="molecule type" value="mRNA"/>
</dbReference>
<dbReference type="PIR" id="T04816">
    <property type="entry name" value="T04816"/>
</dbReference>
<dbReference type="RefSeq" id="NP_194423.1">
    <property type="nucleotide sequence ID" value="NM_118827.2"/>
</dbReference>
<dbReference type="SMR" id="Q9S773"/>
<dbReference type="STRING" id="3702.Q9S773"/>
<dbReference type="PaxDb" id="3702-AT4G26930.1"/>
<dbReference type="EnsemblPlants" id="AT4G26930.1">
    <property type="protein sequence ID" value="AT4G26930.1"/>
    <property type="gene ID" value="AT4G26930"/>
</dbReference>
<dbReference type="GeneID" id="828800"/>
<dbReference type="Gramene" id="AT4G26930.1">
    <property type="protein sequence ID" value="AT4G26930.1"/>
    <property type="gene ID" value="AT4G26930"/>
</dbReference>
<dbReference type="KEGG" id="ath:AT4G26930"/>
<dbReference type="Araport" id="AT4G26930"/>
<dbReference type="TAIR" id="AT4G26930">
    <property type="gene designation" value="MYB97"/>
</dbReference>
<dbReference type="eggNOG" id="KOG0048">
    <property type="taxonomic scope" value="Eukaryota"/>
</dbReference>
<dbReference type="HOGENOM" id="CLU_023548_3_1_1"/>
<dbReference type="InParanoid" id="Q9S773"/>
<dbReference type="OMA" id="KKTWLAR"/>
<dbReference type="PRO" id="PR:Q9S773"/>
<dbReference type="Proteomes" id="UP000006548">
    <property type="component" value="Chromosome 4"/>
</dbReference>
<dbReference type="ExpressionAtlas" id="Q9S773">
    <property type="expression patterns" value="baseline and differential"/>
</dbReference>
<dbReference type="GO" id="GO:0005634">
    <property type="term" value="C:nucleus"/>
    <property type="evidence" value="ECO:0000314"/>
    <property type="project" value="UniProtKB"/>
</dbReference>
<dbReference type="GO" id="GO:0090406">
    <property type="term" value="C:pollen tube"/>
    <property type="evidence" value="ECO:0000314"/>
    <property type="project" value="TAIR"/>
</dbReference>
<dbReference type="GO" id="GO:0003677">
    <property type="term" value="F:DNA binding"/>
    <property type="evidence" value="ECO:0007669"/>
    <property type="project" value="UniProtKB-KW"/>
</dbReference>
<dbReference type="GO" id="GO:0003700">
    <property type="term" value="F:DNA-binding transcription factor activity"/>
    <property type="evidence" value="ECO:0000314"/>
    <property type="project" value="UniProtKB"/>
</dbReference>
<dbReference type="GO" id="GO:0048235">
    <property type="term" value="P:pollen sperm cell differentiation"/>
    <property type="evidence" value="ECO:0000315"/>
    <property type="project" value="UniProtKB"/>
</dbReference>
<dbReference type="GO" id="GO:0045893">
    <property type="term" value="P:positive regulation of DNA-templated transcription"/>
    <property type="evidence" value="ECO:0000314"/>
    <property type="project" value="UniProtKB"/>
</dbReference>
<dbReference type="GO" id="GO:0006355">
    <property type="term" value="P:regulation of DNA-templated transcription"/>
    <property type="evidence" value="ECO:0000304"/>
    <property type="project" value="TAIR"/>
</dbReference>
<dbReference type="GO" id="GO:0010468">
    <property type="term" value="P:regulation of gene expression"/>
    <property type="evidence" value="ECO:0000315"/>
    <property type="project" value="UniProtKB"/>
</dbReference>
<dbReference type="GO" id="GO:0080092">
    <property type="term" value="P:regulation of pollen tube growth"/>
    <property type="evidence" value="ECO:0000315"/>
    <property type="project" value="UniProtKB"/>
</dbReference>
<dbReference type="CDD" id="cd00167">
    <property type="entry name" value="SANT"/>
    <property type="match status" value="2"/>
</dbReference>
<dbReference type="FunFam" id="1.10.10.60:FF:000001">
    <property type="entry name" value="MYB-related transcription factor"/>
    <property type="match status" value="1"/>
</dbReference>
<dbReference type="FunFam" id="1.10.10.60:FF:000404">
    <property type="entry name" value="Transcription factor MYB97"/>
    <property type="match status" value="1"/>
</dbReference>
<dbReference type="Gene3D" id="1.10.10.60">
    <property type="entry name" value="Homeodomain-like"/>
    <property type="match status" value="2"/>
</dbReference>
<dbReference type="InterPro" id="IPR009057">
    <property type="entry name" value="Homeodomain-like_sf"/>
</dbReference>
<dbReference type="InterPro" id="IPR017930">
    <property type="entry name" value="Myb_dom"/>
</dbReference>
<dbReference type="InterPro" id="IPR001005">
    <property type="entry name" value="SANT/Myb"/>
</dbReference>
<dbReference type="PANTHER" id="PTHR47995:SF6">
    <property type="entry name" value="MYB DOMAIN PROTEIN 81-RELATED"/>
    <property type="match status" value="1"/>
</dbReference>
<dbReference type="PANTHER" id="PTHR47995">
    <property type="entry name" value="TRANSCRIPTION FACTOR MYB33-RELATED"/>
    <property type="match status" value="1"/>
</dbReference>
<dbReference type="Pfam" id="PF00249">
    <property type="entry name" value="Myb_DNA-binding"/>
    <property type="match status" value="2"/>
</dbReference>
<dbReference type="SMART" id="SM00717">
    <property type="entry name" value="SANT"/>
    <property type="match status" value="2"/>
</dbReference>
<dbReference type="SUPFAM" id="SSF46689">
    <property type="entry name" value="Homeodomain-like"/>
    <property type="match status" value="1"/>
</dbReference>
<dbReference type="PROSITE" id="PS51294">
    <property type="entry name" value="HTH_MYB"/>
    <property type="match status" value="2"/>
</dbReference>
<keyword id="KW-0010">Activator</keyword>
<keyword id="KW-0238">DNA-binding</keyword>
<keyword id="KW-0539">Nucleus</keyword>
<keyword id="KW-1185">Reference proteome</keyword>
<keyword id="KW-0677">Repeat</keyword>
<keyword id="KW-0804">Transcription</keyword>
<keyword id="KW-0805">Transcription regulation</keyword>
<evidence type="ECO:0000250" key="1">
    <source>
        <dbReference type="UniProtKB" id="O80883"/>
    </source>
</evidence>
<evidence type="ECO:0000255" key="2">
    <source>
        <dbReference type="PROSITE-ProRule" id="PRU00625"/>
    </source>
</evidence>
<evidence type="ECO:0000256" key="3">
    <source>
        <dbReference type="SAM" id="MobiDB-lite"/>
    </source>
</evidence>
<evidence type="ECO:0000269" key="4">
    <source>
    </source>
</evidence>
<evidence type="ECO:0000269" key="5">
    <source>
    </source>
</evidence>
<evidence type="ECO:0000269" key="6">
    <source>
    </source>
</evidence>
<evidence type="ECO:0000303" key="7">
    <source>
    </source>
</evidence>
<evidence type="ECO:0000305" key="8"/>
<evidence type="ECO:0000312" key="9">
    <source>
        <dbReference type="Araport" id="AT4G26930"/>
    </source>
</evidence>
<evidence type="ECO:0000312" key="10">
    <source>
        <dbReference type="EMBL" id="CAB36539.1"/>
    </source>
</evidence>
<accession>Q9S773</accession>
<accession>A0MFA0</accession>
<sequence length="389" mass="43578">MIVYGGGASEDGEGGGVVLKKGPWTVAEDETLAAYVREYGEGNWNSVQKKTWLARCGKSCRLRWANHLRPNLRKGSFTPEEERLIIQLHSQLGNKWARMAAQLPGRTDNEIKNYWNTRLKRFQRQGLPLYPPEYSQNNHQQQMYPQQPSSPLPSQTPASSFTFPLLQPPSLCPKRCYNTAFSPKASYISSPTNFLVSSPTFLHTHSSLSSYQSTNPVYSMKHELSSNQIPYSASLGVYQVSKFSDNGDCNQNLNTGLHTNTCQLLEDLMEEAEALADSFRAPKRRQIMAALEDNNNNNNFFSGGFGHRVSSNSLCSLQGLTPKEDESLQMNTMQDEDITKLLDWGSESEEISNGQSSVITTENNLVLDDHQFAFLFPVDDDTNNLPGIC</sequence>